<proteinExistence type="inferred from homology"/>
<protein>
    <recommendedName>
        <fullName evidence="1">Elongation factor 4</fullName>
        <shortName evidence="1">EF-4</shortName>
        <ecNumber evidence="1">3.6.5.n1</ecNumber>
    </recommendedName>
    <alternativeName>
        <fullName evidence="1">Ribosomal back-translocase LepA</fullName>
    </alternativeName>
</protein>
<name>LEPA_CLOPE</name>
<sequence length="600" mass="67049">MDKKKYIRNFSIVAHIDHGKSTLADRLLEKTGTLTQREMEQQVLDTMELEKERGITIKSQAARLIYKRENGEEYILNLIDTPGHVDFTYEVSRSLAACEGAILVVDATQGIQAQTLANCYLALDNDLEIVPVINKVDLASARPDEIKQEIEDVIGIEAEDAPLVSAKTGLNIEDVLEEIVEKIPAPEGDENAPLKALIFDSYYDSYKGVVCHIRVKDGKVKPGTKIKLMSTDKVYEVVETGVFTPALMPLKEGLSAGEVGYITASIKNVRDARVGDTVTEAARPTEEALPGYKPAIPMVYSGIYPVDGAKYEELKEALEKLQINDAALSFEPETSVALGFGFRCGFLGLLHMEIIQERVEREFNLDIITTAPSVIYKVTKTNGESFDLTNPTNLPPMTEIAYMEEPVVKASIITPTDYTGAVMELCQDRRGKFIDMQYLEETRVVIHYEIPLNEIVYDFFDTLKSKTRGYASLDYELKGYEQSKLVKLDILLNGDNVDALSMIVPEVKAYQRGRAIAEKLKEIIPRHMFEVPIQAAVGSKIIARETVKAMRKDVLAKCYGGDISRKKKLLEKQKEGKKRMRQLGTVEVPQEAFMSVLKVD</sequence>
<reference key="1">
    <citation type="journal article" date="2002" name="Proc. Natl. Acad. Sci. U.S.A.">
        <title>Complete genome sequence of Clostridium perfringens, an anaerobic flesh-eater.</title>
        <authorList>
            <person name="Shimizu T."/>
            <person name="Ohtani K."/>
            <person name="Hirakawa H."/>
            <person name="Ohshima K."/>
            <person name="Yamashita A."/>
            <person name="Shiba T."/>
            <person name="Ogasawara N."/>
            <person name="Hattori M."/>
            <person name="Kuhara S."/>
            <person name="Hayashi H."/>
        </authorList>
    </citation>
    <scope>NUCLEOTIDE SEQUENCE [LARGE SCALE GENOMIC DNA]</scope>
    <source>
        <strain>13 / Type A</strain>
    </source>
</reference>
<dbReference type="EC" id="3.6.5.n1" evidence="1"/>
<dbReference type="EMBL" id="BA000016">
    <property type="protein sequence ID" value="BAB81744.1"/>
    <property type="molecule type" value="Genomic_DNA"/>
</dbReference>
<dbReference type="RefSeq" id="WP_003451176.1">
    <property type="nucleotide sequence ID" value="NC_003366.1"/>
</dbReference>
<dbReference type="SMR" id="Q8XIS6"/>
<dbReference type="STRING" id="195102.gene:10491308"/>
<dbReference type="KEGG" id="cpe:CPE2038"/>
<dbReference type="HOGENOM" id="CLU_009995_3_3_9"/>
<dbReference type="Proteomes" id="UP000000818">
    <property type="component" value="Chromosome"/>
</dbReference>
<dbReference type="GO" id="GO:0005886">
    <property type="term" value="C:plasma membrane"/>
    <property type="evidence" value="ECO:0007669"/>
    <property type="project" value="UniProtKB-SubCell"/>
</dbReference>
<dbReference type="GO" id="GO:0005525">
    <property type="term" value="F:GTP binding"/>
    <property type="evidence" value="ECO:0007669"/>
    <property type="project" value="UniProtKB-UniRule"/>
</dbReference>
<dbReference type="GO" id="GO:0003924">
    <property type="term" value="F:GTPase activity"/>
    <property type="evidence" value="ECO:0007669"/>
    <property type="project" value="UniProtKB-UniRule"/>
</dbReference>
<dbReference type="GO" id="GO:0043022">
    <property type="term" value="F:ribosome binding"/>
    <property type="evidence" value="ECO:0007669"/>
    <property type="project" value="UniProtKB-UniRule"/>
</dbReference>
<dbReference type="GO" id="GO:0003746">
    <property type="term" value="F:translation elongation factor activity"/>
    <property type="evidence" value="ECO:0007669"/>
    <property type="project" value="UniProtKB-UniRule"/>
</dbReference>
<dbReference type="GO" id="GO:0045727">
    <property type="term" value="P:positive regulation of translation"/>
    <property type="evidence" value="ECO:0007669"/>
    <property type="project" value="UniProtKB-UniRule"/>
</dbReference>
<dbReference type="CDD" id="cd03699">
    <property type="entry name" value="EF4_II"/>
    <property type="match status" value="1"/>
</dbReference>
<dbReference type="CDD" id="cd16260">
    <property type="entry name" value="EF4_III"/>
    <property type="match status" value="1"/>
</dbReference>
<dbReference type="CDD" id="cd01890">
    <property type="entry name" value="LepA"/>
    <property type="match status" value="1"/>
</dbReference>
<dbReference type="CDD" id="cd03709">
    <property type="entry name" value="lepA_C"/>
    <property type="match status" value="1"/>
</dbReference>
<dbReference type="FunFam" id="3.40.50.300:FF:000078">
    <property type="entry name" value="Elongation factor 4"/>
    <property type="match status" value="1"/>
</dbReference>
<dbReference type="FunFam" id="2.40.30.10:FF:000015">
    <property type="entry name" value="Translation factor GUF1, mitochondrial"/>
    <property type="match status" value="1"/>
</dbReference>
<dbReference type="FunFam" id="3.30.70.240:FF:000007">
    <property type="entry name" value="Translation factor GUF1, mitochondrial"/>
    <property type="match status" value="1"/>
</dbReference>
<dbReference type="FunFam" id="3.30.70.2570:FF:000001">
    <property type="entry name" value="Translation factor GUF1, mitochondrial"/>
    <property type="match status" value="1"/>
</dbReference>
<dbReference type="FunFam" id="3.30.70.870:FF:000004">
    <property type="entry name" value="Translation factor GUF1, mitochondrial"/>
    <property type="match status" value="1"/>
</dbReference>
<dbReference type="Gene3D" id="3.30.70.240">
    <property type="match status" value="1"/>
</dbReference>
<dbReference type="Gene3D" id="3.30.70.2570">
    <property type="entry name" value="Elongation factor 4, C-terminal domain"/>
    <property type="match status" value="1"/>
</dbReference>
<dbReference type="Gene3D" id="3.30.70.870">
    <property type="entry name" value="Elongation Factor G (Translational Gtpase), domain 3"/>
    <property type="match status" value="1"/>
</dbReference>
<dbReference type="Gene3D" id="3.40.50.300">
    <property type="entry name" value="P-loop containing nucleotide triphosphate hydrolases"/>
    <property type="match status" value="1"/>
</dbReference>
<dbReference type="Gene3D" id="2.40.30.10">
    <property type="entry name" value="Translation factors"/>
    <property type="match status" value="1"/>
</dbReference>
<dbReference type="HAMAP" id="MF_00071">
    <property type="entry name" value="LepA"/>
    <property type="match status" value="1"/>
</dbReference>
<dbReference type="InterPro" id="IPR006297">
    <property type="entry name" value="EF-4"/>
</dbReference>
<dbReference type="InterPro" id="IPR035647">
    <property type="entry name" value="EFG_III/V"/>
</dbReference>
<dbReference type="InterPro" id="IPR000640">
    <property type="entry name" value="EFG_V-like"/>
</dbReference>
<dbReference type="InterPro" id="IPR004161">
    <property type="entry name" value="EFTu-like_2"/>
</dbReference>
<dbReference type="InterPro" id="IPR031157">
    <property type="entry name" value="G_TR_CS"/>
</dbReference>
<dbReference type="InterPro" id="IPR038363">
    <property type="entry name" value="LepA_C_sf"/>
</dbReference>
<dbReference type="InterPro" id="IPR013842">
    <property type="entry name" value="LepA_CTD"/>
</dbReference>
<dbReference type="InterPro" id="IPR035654">
    <property type="entry name" value="LepA_IV"/>
</dbReference>
<dbReference type="InterPro" id="IPR027417">
    <property type="entry name" value="P-loop_NTPase"/>
</dbReference>
<dbReference type="InterPro" id="IPR005225">
    <property type="entry name" value="Small_GTP-bd"/>
</dbReference>
<dbReference type="InterPro" id="IPR000795">
    <property type="entry name" value="T_Tr_GTP-bd_dom"/>
</dbReference>
<dbReference type="InterPro" id="IPR009000">
    <property type="entry name" value="Transl_B-barrel_sf"/>
</dbReference>
<dbReference type="NCBIfam" id="TIGR01393">
    <property type="entry name" value="lepA"/>
    <property type="match status" value="1"/>
</dbReference>
<dbReference type="NCBIfam" id="TIGR00231">
    <property type="entry name" value="small_GTP"/>
    <property type="match status" value="1"/>
</dbReference>
<dbReference type="PANTHER" id="PTHR43512:SF4">
    <property type="entry name" value="TRANSLATION FACTOR GUF1 HOMOLOG, CHLOROPLASTIC"/>
    <property type="match status" value="1"/>
</dbReference>
<dbReference type="PANTHER" id="PTHR43512">
    <property type="entry name" value="TRANSLATION FACTOR GUF1-RELATED"/>
    <property type="match status" value="1"/>
</dbReference>
<dbReference type="Pfam" id="PF00679">
    <property type="entry name" value="EFG_C"/>
    <property type="match status" value="1"/>
</dbReference>
<dbReference type="Pfam" id="PF00009">
    <property type="entry name" value="GTP_EFTU"/>
    <property type="match status" value="1"/>
</dbReference>
<dbReference type="Pfam" id="PF03144">
    <property type="entry name" value="GTP_EFTU_D2"/>
    <property type="match status" value="1"/>
</dbReference>
<dbReference type="Pfam" id="PF06421">
    <property type="entry name" value="LepA_C"/>
    <property type="match status" value="1"/>
</dbReference>
<dbReference type="PRINTS" id="PR00315">
    <property type="entry name" value="ELONGATNFCT"/>
</dbReference>
<dbReference type="SMART" id="SM00838">
    <property type="entry name" value="EFG_C"/>
    <property type="match status" value="1"/>
</dbReference>
<dbReference type="SUPFAM" id="SSF54980">
    <property type="entry name" value="EF-G C-terminal domain-like"/>
    <property type="match status" value="2"/>
</dbReference>
<dbReference type="SUPFAM" id="SSF52540">
    <property type="entry name" value="P-loop containing nucleoside triphosphate hydrolases"/>
    <property type="match status" value="1"/>
</dbReference>
<dbReference type="SUPFAM" id="SSF50447">
    <property type="entry name" value="Translation proteins"/>
    <property type="match status" value="1"/>
</dbReference>
<dbReference type="PROSITE" id="PS00301">
    <property type="entry name" value="G_TR_1"/>
    <property type="match status" value="1"/>
</dbReference>
<dbReference type="PROSITE" id="PS51722">
    <property type="entry name" value="G_TR_2"/>
    <property type="match status" value="1"/>
</dbReference>
<keyword id="KW-1003">Cell membrane</keyword>
<keyword id="KW-0342">GTP-binding</keyword>
<keyword id="KW-0378">Hydrolase</keyword>
<keyword id="KW-0472">Membrane</keyword>
<keyword id="KW-0547">Nucleotide-binding</keyword>
<keyword id="KW-0648">Protein biosynthesis</keyword>
<keyword id="KW-1185">Reference proteome</keyword>
<organism>
    <name type="scientific">Clostridium perfringens (strain 13 / Type A)</name>
    <dbReference type="NCBI Taxonomy" id="195102"/>
    <lineage>
        <taxon>Bacteria</taxon>
        <taxon>Bacillati</taxon>
        <taxon>Bacillota</taxon>
        <taxon>Clostridia</taxon>
        <taxon>Eubacteriales</taxon>
        <taxon>Clostridiaceae</taxon>
        <taxon>Clostridium</taxon>
    </lineage>
</organism>
<accession>Q8XIS6</accession>
<feature type="chain" id="PRO_0000176262" description="Elongation factor 4">
    <location>
        <begin position="1"/>
        <end position="600"/>
    </location>
</feature>
<feature type="domain" description="tr-type G">
    <location>
        <begin position="5"/>
        <end position="187"/>
    </location>
</feature>
<feature type="binding site" evidence="1">
    <location>
        <begin position="17"/>
        <end position="22"/>
    </location>
    <ligand>
        <name>GTP</name>
        <dbReference type="ChEBI" id="CHEBI:37565"/>
    </ligand>
</feature>
<feature type="binding site" evidence="1">
    <location>
        <begin position="134"/>
        <end position="137"/>
    </location>
    <ligand>
        <name>GTP</name>
        <dbReference type="ChEBI" id="CHEBI:37565"/>
    </ligand>
</feature>
<comment type="function">
    <text evidence="1">Required for accurate and efficient protein synthesis under certain stress conditions. May act as a fidelity factor of the translation reaction, by catalyzing a one-codon backward translocation of tRNAs on improperly translocated ribosomes. Back-translocation proceeds from a post-translocation (POST) complex to a pre-translocation (PRE) complex, thus giving elongation factor G a second chance to translocate the tRNAs correctly. Binds to ribosomes in a GTP-dependent manner.</text>
</comment>
<comment type="catalytic activity">
    <reaction evidence="1">
        <text>GTP + H2O = GDP + phosphate + H(+)</text>
        <dbReference type="Rhea" id="RHEA:19669"/>
        <dbReference type="ChEBI" id="CHEBI:15377"/>
        <dbReference type="ChEBI" id="CHEBI:15378"/>
        <dbReference type="ChEBI" id="CHEBI:37565"/>
        <dbReference type="ChEBI" id="CHEBI:43474"/>
        <dbReference type="ChEBI" id="CHEBI:58189"/>
        <dbReference type="EC" id="3.6.5.n1"/>
    </reaction>
</comment>
<comment type="subcellular location">
    <subcellularLocation>
        <location evidence="1">Cell membrane</location>
        <topology evidence="1">Peripheral membrane protein</topology>
        <orientation evidence="1">Cytoplasmic side</orientation>
    </subcellularLocation>
</comment>
<comment type="similarity">
    <text evidence="1">Belongs to the TRAFAC class translation factor GTPase superfamily. Classic translation factor GTPase family. LepA subfamily.</text>
</comment>
<evidence type="ECO:0000255" key="1">
    <source>
        <dbReference type="HAMAP-Rule" id="MF_00071"/>
    </source>
</evidence>
<gene>
    <name evidence="1" type="primary">lepA</name>
    <name type="ordered locus">CPE2038</name>
</gene>